<proteinExistence type="inferred from homology"/>
<protein>
    <recommendedName>
        <fullName evidence="1">Large ribosomal subunit protein bL25</fullName>
    </recommendedName>
    <alternativeName>
        <fullName evidence="3">50S ribosomal protein L25</fullName>
    </alternativeName>
    <alternativeName>
        <fullName evidence="1">General stress protein CTC</fullName>
    </alternativeName>
</protein>
<organism>
    <name type="scientific">Nitrobacter winogradskyi (strain ATCC 25391 / DSM 10237 / CIP 104748 / NCIMB 11846 / Nb-255)</name>
    <dbReference type="NCBI Taxonomy" id="323098"/>
    <lineage>
        <taxon>Bacteria</taxon>
        <taxon>Pseudomonadati</taxon>
        <taxon>Pseudomonadota</taxon>
        <taxon>Alphaproteobacteria</taxon>
        <taxon>Hyphomicrobiales</taxon>
        <taxon>Nitrobacteraceae</taxon>
        <taxon>Nitrobacter</taxon>
    </lineage>
</organism>
<name>RL25_NITWN</name>
<dbReference type="EMBL" id="CP000115">
    <property type="protein sequence ID" value="ABA05765.1"/>
    <property type="molecule type" value="Genomic_DNA"/>
</dbReference>
<dbReference type="RefSeq" id="WP_011315716.1">
    <property type="nucleotide sequence ID" value="NC_007406.1"/>
</dbReference>
<dbReference type="SMR" id="Q3SPM6"/>
<dbReference type="STRING" id="323098.Nwi_2512"/>
<dbReference type="KEGG" id="nwi:Nwi_2512"/>
<dbReference type="eggNOG" id="COG1825">
    <property type="taxonomic scope" value="Bacteria"/>
</dbReference>
<dbReference type="HOGENOM" id="CLU_075939_0_0_5"/>
<dbReference type="OrthoDB" id="9806411at2"/>
<dbReference type="Proteomes" id="UP000002531">
    <property type="component" value="Chromosome"/>
</dbReference>
<dbReference type="GO" id="GO:0022625">
    <property type="term" value="C:cytosolic large ribosomal subunit"/>
    <property type="evidence" value="ECO:0007669"/>
    <property type="project" value="TreeGrafter"/>
</dbReference>
<dbReference type="GO" id="GO:0008097">
    <property type="term" value="F:5S rRNA binding"/>
    <property type="evidence" value="ECO:0007669"/>
    <property type="project" value="InterPro"/>
</dbReference>
<dbReference type="GO" id="GO:0003735">
    <property type="term" value="F:structural constituent of ribosome"/>
    <property type="evidence" value="ECO:0007669"/>
    <property type="project" value="InterPro"/>
</dbReference>
<dbReference type="GO" id="GO:0006412">
    <property type="term" value="P:translation"/>
    <property type="evidence" value="ECO:0007669"/>
    <property type="project" value="UniProtKB-UniRule"/>
</dbReference>
<dbReference type="CDD" id="cd00495">
    <property type="entry name" value="Ribosomal_L25_TL5_CTC"/>
    <property type="match status" value="1"/>
</dbReference>
<dbReference type="Gene3D" id="2.170.120.20">
    <property type="entry name" value="Ribosomal protein L25, beta domain"/>
    <property type="match status" value="1"/>
</dbReference>
<dbReference type="Gene3D" id="2.40.240.10">
    <property type="entry name" value="Ribosomal Protein L25, Chain P"/>
    <property type="match status" value="1"/>
</dbReference>
<dbReference type="HAMAP" id="MF_01334">
    <property type="entry name" value="Ribosomal_bL25_CTC"/>
    <property type="match status" value="1"/>
</dbReference>
<dbReference type="InterPro" id="IPR020056">
    <property type="entry name" value="Rbsml_bL25/Gln-tRNA_synth_N"/>
</dbReference>
<dbReference type="InterPro" id="IPR011035">
    <property type="entry name" value="Ribosomal_bL25/Gln-tRNA_synth"/>
</dbReference>
<dbReference type="InterPro" id="IPR020057">
    <property type="entry name" value="Ribosomal_bL25_b-dom"/>
</dbReference>
<dbReference type="InterPro" id="IPR037121">
    <property type="entry name" value="Ribosomal_bL25_C"/>
</dbReference>
<dbReference type="InterPro" id="IPR001021">
    <property type="entry name" value="Ribosomal_bL25_long"/>
</dbReference>
<dbReference type="InterPro" id="IPR029751">
    <property type="entry name" value="Ribosomal_L25_dom"/>
</dbReference>
<dbReference type="InterPro" id="IPR020930">
    <property type="entry name" value="Ribosomal_uL5_bac-type"/>
</dbReference>
<dbReference type="NCBIfam" id="TIGR00731">
    <property type="entry name" value="bL25_bact_ctc"/>
    <property type="match status" value="1"/>
</dbReference>
<dbReference type="NCBIfam" id="NF004128">
    <property type="entry name" value="PRK05618.1-2"/>
    <property type="match status" value="1"/>
</dbReference>
<dbReference type="PANTHER" id="PTHR33284">
    <property type="entry name" value="RIBOSOMAL PROTEIN L25/GLN-TRNA SYNTHETASE, ANTI-CODON-BINDING DOMAIN-CONTAINING PROTEIN"/>
    <property type="match status" value="1"/>
</dbReference>
<dbReference type="PANTHER" id="PTHR33284:SF1">
    <property type="entry name" value="RIBOSOMAL PROTEIN L25_GLN-TRNA SYNTHETASE, ANTI-CODON-BINDING DOMAIN-CONTAINING PROTEIN"/>
    <property type="match status" value="1"/>
</dbReference>
<dbReference type="Pfam" id="PF01386">
    <property type="entry name" value="Ribosomal_L25p"/>
    <property type="match status" value="1"/>
</dbReference>
<dbReference type="Pfam" id="PF14693">
    <property type="entry name" value="Ribosomal_TL5_C"/>
    <property type="match status" value="1"/>
</dbReference>
<dbReference type="SUPFAM" id="SSF50715">
    <property type="entry name" value="Ribosomal protein L25-like"/>
    <property type="match status" value="1"/>
</dbReference>
<sequence length="228" mass="23822">MATVMELKATARPKSGKGAARAERRAGRVPAVIYGNKQPPQPISVEEPELRQRILAGRFLTTIFDINLDGKKHRVIPRDFHLDPVKDFPIHVDFMRLGEGATIRVSVPLRLLKADVAPGVKRGGTVNLVTHAIDVECAAESIPQFIEADVGALEISHSLHLSDLQLPPGVKPLAREDVTLVTIVPPSGYAEELKAAAAAGAAAPAAGAAPAAAAAGAKAPAGGGDKKK</sequence>
<evidence type="ECO:0000255" key="1">
    <source>
        <dbReference type="HAMAP-Rule" id="MF_01334"/>
    </source>
</evidence>
<evidence type="ECO:0000256" key="2">
    <source>
        <dbReference type="SAM" id="MobiDB-lite"/>
    </source>
</evidence>
<evidence type="ECO:0000305" key="3"/>
<accession>Q3SPM6</accession>
<reference key="1">
    <citation type="journal article" date="2006" name="Appl. Environ. Microbiol.">
        <title>Genome sequence of the chemolithoautotrophic nitrite-oxidizing bacterium Nitrobacter winogradskyi Nb-255.</title>
        <authorList>
            <person name="Starkenburg S.R."/>
            <person name="Chain P.S.G."/>
            <person name="Sayavedra-Soto L.A."/>
            <person name="Hauser L."/>
            <person name="Land M.L."/>
            <person name="Larimer F.W."/>
            <person name="Malfatti S.A."/>
            <person name="Klotz M.G."/>
            <person name="Bottomley P.J."/>
            <person name="Arp D.J."/>
            <person name="Hickey W.J."/>
        </authorList>
    </citation>
    <scope>NUCLEOTIDE SEQUENCE [LARGE SCALE GENOMIC DNA]</scope>
    <source>
        <strain>ATCC 25391 / DSM 10237 / CIP 104748 / NCIMB 11846 / Nb-255</strain>
    </source>
</reference>
<feature type="chain" id="PRO_0000244218" description="Large ribosomal subunit protein bL25">
    <location>
        <begin position="1"/>
        <end position="228"/>
    </location>
</feature>
<feature type="region of interest" description="Disordered" evidence="2">
    <location>
        <begin position="1"/>
        <end position="24"/>
    </location>
</feature>
<keyword id="KW-1185">Reference proteome</keyword>
<keyword id="KW-0687">Ribonucleoprotein</keyword>
<keyword id="KW-0689">Ribosomal protein</keyword>
<keyword id="KW-0694">RNA-binding</keyword>
<keyword id="KW-0699">rRNA-binding</keyword>
<comment type="function">
    <text evidence="1">This is one of the proteins that binds to the 5S RNA in the ribosome where it forms part of the central protuberance.</text>
</comment>
<comment type="subunit">
    <text evidence="1">Part of the 50S ribosomal subunit; part of the 5S rRNA/L5/L18/L25 subcomplex. Contacts the 5S rRNA. Binds to the 5S rRNA independently of L5 and L18.</text>
</comment>
<comment type="similarity">
    <text evidence="1">Belongs to the bacterial ribosomal protein bL25 family. CTC subfamily.</text>
</comment>
<gene>
    <name evidence="1" type="primary">rplY</name>
    <name evidence="1" type="synonym">ctc</name>
    <name type="ordered locus">Nwi_2512</name>
</gene>